<protein>
    <recommendedName>
        <fullName evidence="1">Ribosome modulation factor</fullName>
        <shortName evidence="1">RMF</shortName>
    </recommendedName>
</protein>
<sequence length="58" mass="6670">MKRQKRDKLTRAHSKGYQAGISGRSKDICPFQQNDARSEWLGGWREAVEDRHVGLSVK</sequence>
<name>RMF_ALTNA</name>
<reference key="1">
    <citation type="journal article" date="2011" name="J. Bacteriol.">
        <title>Complete genome sequence of the polycyclic aromatic hydrocarbon-degrading bacterium Alteromonas sp. strain SN2.</title>
        <authorList>
            <person name="Jin H.M."/>
            <person name="Jeong H."/>
            <person name="Moon E.J."/>
            <person name="Math R.K."/>
            <person name="Lee K."/>
            <person name="Kim H.J."/>
            <person name="Jeon C.O."/>
            <person name="Oh T.K."/>
            <person name="Kim J.F."/>
        </authorList>
    </citation>
    <scope>NUCLEOTIDE SEQUENCE [LARGE SCALE GENOMIC DNA]</scope>
    <source>
        <strain>JCM 17741 / KACC 18427 / KCTC 11700BP / SN2</strain>
    </source>
</reference>
<keyword id="KW-0963">Cytoplasm</keyword>
<keyword id="KW-0810">Translation regulation</keyword>
<organism>
    <name type="scientific">Alteromonas naphthalenivorans</name>
    <dbReference type="NCBI Taxonomy" id="715451"/>
    <lineage>
        <taxon>Bacteria</taxon>
        <taxon>Pseudomonadati</taxon>
        <taxon>Pseudomonadota</taxon>
        <taxon>Gammaproteobacteria</taxon>
        <taxon>Alteromonadales</taxon>
        <taxon>Alteromonadaceae</taxon>
        <taxon>Alteromonas/Salinimonas group</taxon>
        <taxon>Alteromonas</taxon>
    </lineage>
</organism>
<gene>
    <name evidence="1" type="primary">rmf</name>
    <name type="ordered locus">ambt_08100</name>
</gene>
<dbReference type="EMBL" id="CP002339">
    <property type="protein sequence ID" value="AEF03148.1"/>
    <property type="molecule type" value="Genomic_DNA"/>
</dbReference>
<dbReference type="RefSeq" id="WP_013784086.1">
    <property type="nucleotide sequence ID" value="NC_015554.1"/>
</dbReference>
<dbReference type="SMR" id="F5Z7V5"/>
<dbReference type="GeneID" id="83257294"/>
<dbReference type="KEGG" id="alt:ambt_08100"/>
<dbReference type="eggNOG" id="COG3130">
    <property type="taxonomic scope" value="Bacteria"/>
</dbReference>
<dbReference type="HOGENOM" id="CLU_203350_0_0_6"/>
<dbReference type="OrthoDB" id="5917763at2"/>
<dbReference type="Proteomes" id="UP000000683">
    <property type="component" value="Chromosome"/>
</dbReference>
<dbReference type="GO" id="GO:0005737">
    <property type="term" value="C:cytoplasm"/>
    <property type="evidence" value="ECO:0007669"/>
    <property type="project" value="UniProtKB-SubCell"/>
</dbReference>
<dbReference type="GO" id="GO:0006417">
    <property type="term" value="P:regulation of translation"/>
    <property type="evidence" value="ECO:0007669"/>
    <property type="project" value="UniProtKB-UniRule"/>
</dbReference>
<dbReference type="Gene3D" id="1.10.10.620">
    <property type="entry name" value="ribosome modulation factor like domain"/>
    <property type="match status" value="1"/>
</dbReference>
<dbReference type="HAMAP" id="MF_00919">
    <property type="entry name" value="RMF"/>
    <property type="match status" value="1"/>
</dbReference>
<dbReference type="InterPro" id="IPR007040">
    <property type="entry name" value="Ribosome_modulation_factor"/>
</dbReference>
<dbReference type="InterPro" id="IPR023200">
    <property type="entry name" value="RMF_sf"/>
</dbReference>
<dbReference type="NCBIfam" id="NF011162">
    <property type="entry name" value="PRK14563.1"/>
    <property type="match status" value="1"/>
</dbReference>
<dbReference type="NCBIfam" id="NF041886">
    <property type="entry name" value="Rmf_CrpP_fam"/>
    <property type="match status" value="1"/>
</dbReference>
<dbReference type="Pfam" id="PF04957">
    <property type="entry name" value="RMF"/>
    <property type="match status" value="1"/>
</dbReference>
<proteinExistence type="inferred from homology"/>
<feature type="chain" id="PRO_0000416468" description="Ribosome modulation factor">
    <location>
        <begin position="1"/>
        <end position="58"/>
    </location>
</feature>
<feature type="region of interest" description="Disordered" evidence="2">
    <location>
        <begin position="1"/>
        <end position="25"/>
    </location>
</feature>
<feature type="compositionally biased region" description="Basic residues" evidence="2">
    <location>
        <begin position="1"/>
        <end position="14"/>
    </location>
</feature>
<comment type="function">
    <text evidence="1">During stationary phase, converts 70S ribosomes to an inactive dimeric form (100S ribosomes).</text>
</comment>
<comment type="subcellular location">
    <subcellularLocation>
        <location evidence="1">Cytoplasm</location>
    </subcellularLocation>
</comment>
<comment type="similarity">
    <text evidence="1">Belongs to the ribosome modulation factor family.</text>
</comment>
<accession>F5Z7V5</accession>
<evidence type="ECO:0000255" key="1">
    <source>
        <dbReference type="HAMAP-Rule" id="MF_00919"/>
    </source>
</evidence>
<evidence type="ECO:0000256" key="2">
    <source>
        <dbReference type="SAM" id="MobiDB-lite"/>
    </source>
</evidence>